<gene>
    <name evidence="1" type="primary">rplJ</name>
    <name type="ordered locus">BAMEG_0115</name>
</gene>
<comment type="function">
    <text evidence="1">Forms part of the ribosomal stalk, playing a central role in the interaction of the ribosome with GTP-bound translation factors.</text>
</comment>
<comment type="subunit">
    <text evidence="1">Part of the ribosomal stalk of the 50S ribosomal subunit. The N-terminus interacts with L11 and the large rRNA to form the base of the stalk. The C-terminus forms an elongated spine to which L12 dimers bind in a sequential fashion forming a multimeric L10(L12)X complex.</text>
</comment>
<comment type="similarity">
    <text evidence="1">Belongs to the universal ribosomal protein uL10 family.</text>
</comment>
<feature type="chain" id="PRO_1000195525" description="Large ribosomal subunit protein uL10">
    <location>
        <begin position="1"/>
        <end position="166"/>
    </location>
</feature>
<sequence>MSKVIETKQQVVTEIADKLRASKSTIVVDYRGLTVSEATELRKQLREAGVEFKVYKNSLTRRAAESAEMAELNEFLTGPNAIAFSNEDVVAPAKVLNDFAKDHEALEIKAGVIEGKLVTLDEVKAIATLPSREGLLSMLLSVLQAPIRNLALATKAVADQKEEQGA</sequence>
<proteinExistence type="inferred from homology"/>
<accession>C3LJ71</accession>
<keyword id="KW-0687">Ribonucleoprotein</keyword>
<keyword id="KW-0689">Ribosomal protein</keyword>
<keyword id="KW-0694">RNA-binding</keyword>
<keyword id="KW-0699">rRNA-binding</keyword>
<protein>
    <recommendedName>
        <fullName evidence="1">Large ribosomal subunit protein uL10</fullName>
    </recommendedName>
    <alternativeName>
        <fullName evidence="2">50S ribosomal protein L10</fullName>
    </alternativeName>
</protein>
<name>RL10_BACAC</name>
<dbReference type="EMBL" id="CP001215">
    <property type="protein sequence ID" value="ACP13308.1"/>
    <property type="molecule type" value="Genomic_DNA"/>
</dbReference>
<dbReference type="RefSeq" id="WP_000048716.1">
    <property type="nucleotide sequence ID" value="NC_012581.1"/>
</dbReference>
<dbReference type="SMR" id="C3LJ71"/>
<dbReference type="GeneID" id="93010954"/>
<dbReference type="KEGG" id="bah:BAMEG_0115"/>
<dbReference type="HOGENOM" id="CLU_092227_2_0_9"/>
<dbReference type="GO" id="GO:0015934">
    <property type="term" value="C:large ribosomal subunit"/>
    <property type="evidence" value="ECO:0007669"/>
    <property type="project" value="InterPro"/>
</dbReference>
<dbReference type="GO" id="GO:0070180">
    <property type="term" value="F:large ribosomal subunit rRNA binding"/>
    <property type="evidence" value="ECO:0007669"/>
    <property type="project" value="UniProtKB-UniRule"/>
</dbReference>
<dbReference type="GO" id="GO:0003735">
    <property type="term" value="F:structural constituent of ribosome"/>
    <property type="evidence" value="ECO:0007669"/>
    <property type="project" value="InterPro"/>
</dbReference>
<dbReference type="GO" id="GO:0006412">
    <property type="term" value="P:translation"/>
    <property type="evidence" value="ECO:0007669"/>
    <property type="project" value="UniProtKB-UniRule"/>
</dbReference>
<dbReference type="CDD" id="cd05797">
    <property type="entry name" value="Ribosomal_L10"/>
    <property type="match status" value="1"/>
</dbReference>
<dbReference type="FunFam" id="3.30.70.1730:FF:000001">
    <property type="entry name" value="50S ribosomal protein L10"/>
    <property type="match status" value="1"/>
</dbReference>
<dbReference type="Gene3D" id="3.30.70.1730">
    <property type="match status" value="1"/>
</dbReference>
<dbReference type="Gene3D" id="6.10.250.290">
    <property type="match status" value="1"/>
</dbReference>
<dbReference type="HAMAP" id="MF_00362">
    <property type="entry name" value="Ribosomal_uL10"/>
    <property type="match status" value="1"/>
</dbReference>
<dbReference type="InterPro" id="IPR001790">
    <property type="entry name" value="Ribosomal_uL10"/>
</dbReference>
<dbReference type="InterPro" id="IPR043141">
    <property type="entry name" value="Ribosomal_uL10-like_sf"/>
</dbReference>
<dbReference type="InterPro" id="IPR022973">
    <property type="entry name" value="Ribosomal_uL10_bac"/>
</dbReference>
<dbReference type="InterPro" id="IPR047865">
    <property type="entry name" value="Ribosomal_uL10_bac_type"/>
</dbReference>
<dbReference type="InterPro" id="IPR002363">
    <property type="entry name" value="Ribosomal_uL10_CS_bac"/>
</dbReference>
<dbReference type="NCBIfam" id="NF000955">
    <property type="entry name" value="PRK00099.1-1"/>
    <property type="match status" value="1"/>
</dbReference>
<dbReference type="PANTHER" id="PTHR11560">
    <property type="entry name" value="39S RIBOSOMAL PROTEIN L10, MITOCHONDRIAL"/>
    <property type="match status" value="1"/>
</dbReference>
<dbReference type="Pfam" id="PF00466">
    <property type="entry name" value="Ribosomal_L10"/>
    <property type="match status" value="1"/>
</dbReference>
<dbReference type="SUPFAM" id="SSF160369">
    <property type="entry name" value="Ribosomal protein L10-like"/>
    <property type="match status" value="1"/>
</dbReference>
<dbReference type="PROSITE" id="PS01109">
    <property type="entry name" value="RIBOSOMAL_L10"/>
    <property type="match status" value="1"/>
</dbReference>
<reference key="1">
    <citation type="submission" date="2008-10" db="EMBL/GenBank/DDBJ databases">
        <title>Genome sequence of Bacillus anthracis str. CDC 684.</title>
        <authorList>
            <person name="Dodson R.J."/>
            <person name="Munk A.C."/>
            <person name="Brettin T."/>
            <person name="Bruce D."/>
            <person name="Detter C."/>
            <person name="Tapia R."/>
            <person name="Han C."/>
            <person name="Sutton G."/>
            <person name="Sims D."/>
        </authorList>
    </citation>
    <scope>NUCLEOTIDE SEQUENCE [LARGE SCALE GENOMIC DNA]</scope>
    <source>
        <strain>CDC 684 / NRRL 3495</strain>
    </source>
</reference>
<organism>
    <name type="scientific">Bacillus anthracis (strain CDC 684 / NRRL 3495)</name>
    <dbReference type="NCBI Taxonomy" id="568206"/>
    <lineage>
        <taxon>Bacteria</taxon>
        <taxon>Bacillati</taxon>
        <taxon>Bacillota</taxon>
        <taxon>Bacilli</taxon>
        <taxon>Bacillales</taxon>
        <taxon>Bacillaceae</taxon>
        <taxon>Bacillus</taxon>
        <taxon>Bacillus cereus group</taxon>
    </lineage>
</organism>
<evidence type="ECO:0000255" key="1">
    <source>
        <dbReference type="HAMAP-Rule" id="MF_00362"/>
    </source>
</evidence>
<evidence type="ECO:0000305" key="2"/>